<sequence length="169" mass="19013">MYTSGYANRSSSFPTTTHNAARTATENAAAGLVSEVVYHEDQPMMAQLLLLPLLRQLGQQSRWQLWLTPQQKLSREWVQSSGLPLTKVMQISQLAPRHTLESMIRALRTGNYSVVIGWMTEELTEEEHASLVEAAKVGNAVGFIMRPVRAHALPRRQHSGLKIHSNLYH</sequence>
<name>SULA_SALPB</name>
<comment type="function">
    <text evidence="1">Component of the SOS system and an inhibitor of cell division. Accumulation of SulA causes rapid cessation of cell division and the appearance of long, non-septate filaments. In the presence of GTP, binds a polymerization-competent form of FtsZ in a 1:1 ratio, thus inhibiting FtsZ polymerization and therefore preventing it from participating in the assembly of the Z ring. This mechanism prevents the premature segregation of damaged DNA to daughter cells during cell division.</text>
</comment>
<comment type="subunit">
    <text evidence="1">Interacts with FtsZ.</text>
</comment>
<comment type="induction">
    <text evidence="1">By DNA damage, as part of the SOS response.</text>
</comment>
<comment type="PTM">
    <text evidence="1">Is rapidly cleaved and degraded by the Lon protease once DNA damage is repaired.</text>
</comment>
<comment type="similarity">
    <text evidence="1">Belongs to the SulA family.</text>
</comment>
<gene>
    <name evidence="1" type="primary">sulA</name>
    <name type="ordered locus">SPAB_02487</name>
</gene>
<organism>
    <name type="scientific">Salmonella paratyphi B (strain ATCC BAA-1250 / SPB7)</name>
    <dbReference type="NCBI Taxonomy" id="1016998"/>
    <lineage>
        <taxon>Bacteria</taxon>
        <taxon>Pseudomonadati</taxon>
        <taxon>Pseudomonadota</taxon>
        <taxon>Gammaproteobacteria</taxon>
        <taxon>Enterobacterales</taxon>
        <taxon>Enterobacteriaceae</taxon>
        <taxon>Salmonella</taxon>
    </lineage>
</organism>
<keyword id="KW-0131">Cell cycle</keyword>
<keyword id="KW-0132">Cell division</keyword>
<keyword id="KW-0227">DNA damage</keyword>
<keyword id="KW-0717">Septation</keyword>
<keyword id="KW-0742">SOS response</keyword>
<dbReference type="EMBL" id="CP000886">
    <property type="protein sequence ID" value="ABX67867.1"/>
    <property type="molecule type" value="Genomic_DNA"/>
</dbReference>
<dbReference type="RefSeq" id="WP_000288732.1">
    <property type="nucleotide sequence ID" value="NC_010102.1"/>
</dbReference>
<dbReference type="SMR" id="A9N6X0"/>
<dbReference type="KEGG" id="spq:SPAB_02487"/>
<dbReference type="PATRIC" id="fig|1016998.12.peg.2354"/>
<dbReference type="HOGENOM" id="CLU_118972_1_0_6"/>
<dbReference type="BioCyc" id="SENT1016998:SPAB_RS10110-MONOMER"/>
<dbReference type="Proteomes" id="UP000008556">
    <property type="component" value="Chromosome"/>
</dbReference>
<dbReference type="GO" id="GO:0000917">
    <property type="term" value="P:division septum assembly"/>
    <property type="evidence" value="ECO:0007669"/>
    <property type="project" value="UniProtKB-KW"/>
</dbReference>
<dbReference type="GO" id="GO:0006281">
    <property type="term" value="P:DNA repair"/>
    <property type="evidence" value="ECO:0007669"/>
    <property type="project" value="TreeGrafter"/>
</dbReference>
<dbReference type="GO" id="GO:0051782">
    <property type="term" value="P:negative regulation of cell division"/>
    <property type="evidence" value="ECO:0007669"/>
    <property type="project" value="UniProtKB-UniRule"/>
</dbReference>
<dbReference type="GO" id="GO:0009432">
    <property type="term" value="P:SOS response"/>
    <property type="evidence" value="ECO:0007669"/>
    <property type="project" value="UniProtKB-UniRule"/>
</dbReference>
<dbReference type="FunFam" id="3.40.50.300:FF:000417">
    <property type="entry name" value="Cell division inhibitor SulA"/>
    <property type="match status" value="1"/>
</dbReference>
<dbReference type="Gene3D" id="3.40.50.300">
    <property type="entry name" value="P-loop containing nucleotide triphosphate hydrolases"/>
    <property type="match status" value="1"/>
</dbReference>
<dbReference type="HAMAP" id="MF_01179">
    <property type="entry name" value="SulA"/>
    <property type="match status" value="1"/>
</dbReference>
<dbReference type="InterPro" id="IPR004596">
    <property type="entry name" value="Cell_div_suppressor_SulA"/>
</dbReference>
<dbReference type="InterPro" id="IPR027417">
    <property type="entry name" value="P-loop_NTPase"/>
</dbReference>
<dbReference type="InterPro" id="IPR050356">
    <property type="entry name" value="SulA_CellDiv_inhibitor"/>
</dbReference>
<dbReference type="InterPro" id="IPR047696">
    <property type="entry name" value="SulA_enterobact"/>
</dbReference>
<dbReference type="NCBIfam" id="NF007892">
    <property type="entry name" value="PRK10595.1"/>
    <property type="match status" value="1"/>
</dbReference>
<dbReference type="NCBIfam" id="TIGR00623">
    <property type="entry name" value="SOS_SulA_coli"/>
    <property type="match status" value="1"/>
</dbReference>
<dbReference type="PANTHER" id="PTHR35369">
    <property type="entry name" value="BLR3025 PROTEIN-RELATED"/>
    <property type="match status" value="1"/>
</dbReference>
<dbReference type="PANTHER" id="PTHR35369:SF4">
    <property type="entry name" value="CELL DIVISION INHIBITOR SULA"/>
    <property type="match status" value="1"/>
</dbReference>
<dbReference type="Pfam" id="PF03846">
    <property type="entry name" value="SulA"/>
    <property type="match status" value="1"/>
</dbReference>
<dbReference type="PIRSF" id="PIRSF003093">
    <property type="entry name" value="SulA"/>
    <property type="match status" value="1"/>
</dbReference>
<dbReference type="SUPFAM" id="SSF52540">
    <property type="entry name" value="P-loop containing nucleoside triphosphate hydrolases"/>
    <property type="match status" value="1"/>
</dbReference>
<evidence type="ECO:0000255" key="1">
    <source>
        <dbReference type="HAMAP-Rule" id="MF_01179"/>
    </source>
</evidence>
<protein>
    <recommendedName>
        <fullName evidence="1">Cell division inhibitor SulA</fullName>
    </recommendedName>
</protein>
<accession>A9N6X0</accession>
<reference key="1">
    <citation type="submission" date="2007-11" db="EMBL/GenBank/DDBJ databases">
        <authorList>
            <consortium name="The Salmonella enterica serovar Paratyphi B Genome Sequencing Project"/>
            <person name="McClelland M."/>
            <person name="Sanderson E.K."/>
            <person name="Porwollik S."/>
            <person name="Spieth J."/>
            <person name="Clifton W.S."/>
            <person name="Fulton R."/>
            <person name="Cordes M."/>
            <person name="Wollam A."/>
            <person name="Shah N."/>
            <person name="Pepin K."/>
            <person name="Bhonagiri V."/>
            <person name="Nash W."/>
            <person name="Johnson M."/>
            <person name="Thiruvilangam P."/>
            <person name="Wilson R."/>
        </authorList>
    </citation>
    <scope>NUCLEOTIDE SEQUENCE [LARGE SCALE GENOMIC DNA]</scope>
    <source>
        <strain>ATCC BAA-1250 / SPB7</strain>
    </source>
</reference>
<feature type="chain" id="PRO_0000343973" description="Cell division inhibitor SulA">
    <location>
        <begin position="1"/>
        <end position="169"/>
    </location>
</feature>
<feature type="region of interest" description="FtsZ binding" evidence="1">
    <location>
        <begin position="106"/>
        <end position="112"/>
    </location>
</feature>
<feature type="region of interest" description="Lon protease binding" evidence="1">
    <location>
        <begin position="162"/>
        <end position="169"/>
    </location>
</feature>
<feature type="site" description="Essential for degradation by Lon protease" evidence="1">
    <location>
        <position position="169"/>
    </location>
</feature>
<proteinExistence type="inferred from homology"/>